<reference key="1">
    <citation type="journal article" date="2011" name="PLoS Genet.">
        <title>The evolution of host specialization in the vertebrate gut symbiont Lactobacillus reuteri.</title>
        <authorList>
            <person name="Frese S.A."/>
            <person name="Benson A.K."/>
            <person name="Tannock G.W."/>
            <person name="Loach D.M."/>
            <person name="Kim J."/>
            <person name="Zhang M."/>
            <person name="Oh P.L."/>
            <person name="Heng N.C."/>
            <person name="Patil P.B."/>
            <person name="Juge N."/>
            <person name="Mackenzie D.A."/>
            <person name="Pearson B.M."/>
            <person name="Lapidus A."/>
            <person name="Dalin E."/>
            <person name="Tice H."/>
            <person name="Goltsman E."/>
            <person name="Land M."/>
            <person name="Hauser L."/>
            <person name="Ivanova N."/>
            <person name="Kyrpides N.C."/>
            <person name="Walter J."/>
        </authorList>
    </citation>
    <scope>NUCLEOTIDE SEQUENCE [LARGE SCALE GENOMIC DNA]</scope>
    <source>
        <strain>DSM 20016</strain>
    </source>
</reference>
<dbReference type="EMBL" id="CP000705">
    <property type="protein sequence ID" value="ABQ83334.1"/>
    <property type="molecule type" value="Genomic_DNA"/>
</dbReference>
<dbReference type="RefSeq" id="WP_003667006.1">
    <property type="nucleotide sequence ID" value="NZ_AZDD01000032.1"/>
</dbReference>
<dbReference type="SMR" id="A5VKG0"/>
<dbReference type="STRING" id="557436.Lreu_1077"/>
<dbReference type="GeneID" id="77191802"/>
<dbReference type="KEGG" id="lre:Lreu_1077"/>
<dbReference type="PATRIC" id="fig|557436.17.peg.1199"/>
<dbReference type="eggNOG" id="COG0199">
    <property type="taxonomic scope" value="Bacteria"/>
</dbReference>
<dbReference type="HOGENOM" id="CLU_139869_0_0_9"/>
<dbReference type="OMA" id="RIKFRDL"/>
<dbReference type="Proteomes" id="UP000001991">
    <property type="component" value="Chromosome"/>
</dbReference>
<dbReference type="GO" id="GO:0005737">
    <property type="term" value="C:cytoplasm"/>
    <property type="evidence" value="ECO:0007669"/>
    <property type="project" value="UniProtKB-ARBA"/>
</dbReference>
<dbReference type="GO" id="GO:0015935">
    <property type="term" value="C:small ribosomal subunit"/>
    <property type="evidence" value="ECO:0007669"/>
    <property type="project" value="TreeGrafter"/>
</dbReference>
<dbReference type="GO" id="GO:0019843">
    <property type="term" value="F:rRNA binding"/>
    <property type="evidence" value="ECO:0007669"/>
    <property type="project" value="UniProtKB-UniRule"/>
</dbReference>
<dbReference type="GO" id="GO:0003735">
    <property type="term" value="F:structural constituent of ribosome"/>
    <property type="evidence" value="ECO:0007669"/>
    <property type="project" value="InterPro"/>
</dbReference>
<dbReference type="GO" id="GO:0006412">
    <property type="term" value="P:translation"/>
    <property type="evidence" value="ECO:0007669"/>
    <property type="project" value="UniProtKB-UniRule"/>
</dbReference>
<dbReference type="Gene3D" id="4.10.830.10">
    <property type="entry name" value="30s Ribosomal Protein S14, Chain N"/>
    <property type="match status" value="1"/>
</dbReference>
<dbReference type="HAMAP" id="MF_00537">
    <property type="entry name" value="Ribosomal_uS14_1"/>
    <property type="match status" value="1"/>
</dbReference>
<dbReference type="InterPro" id="IPR001209">
    <property type="entry name" value="Ribosomal_uS14"/>
</dbReference>
<dbReference type="InterPro" id="IPR023036">
    <property type="entry name" value="Ribosomal_uS14_bac/plastid"/>
</dbReference>
<dbReference type="InterPro" id="IPR043140">
    <property type="entry name" value="Ribosomal_uS14_sf"/>
</dbReference>
<dbReference type="NCBIfam" id="NF006477">
    <property type="entry name" value="PRK08881.1"/>
    <property type="match status" value="1"/>
</dbReference>
<dbReference type="PANTHER" id="PTHR19836">
    <property type="entry name" value="30S RIBOSOMAL PROTEIN S14"/>
    <property type="match status" value="1"/>
</dbReference>
<dbReference type="PANTHER" id="PTHR19836:SF19">
    <property type="entry name" value="SMALL RIBOSOMAL SUBUNIT PROTEIN US14M"/>
    <property type="match status" value="1"/>
</dbReference>
<dbReference type="Pfam" id="PF00253">
    <property type="entry name" value="Ribosomal_S14"/>
    <property type="match status" value="1"/>
</dbReference>
<dbReference type="SUPFAM" id="SSF57716">
    <property type="entry name" value="Glucocorticoid receptor-like (DNA-binding domain)"/>
    <property type="match status" value="1"/>
</dbReference>
<feature type="chain" id="PRO_1000128430" description="Small ribosomal subunit protein uS14A">
    <location>
        <begin position="1"/>
        <end position="89"/>
    </location>
</feature>
<keyword id="KW-1185">Reference proteome</keyword>
<keyword id="KW-0687">Ribonucleoprotein</keyword>
<keyword id="KW-0689">Ribosomal protein</keyword>
<keyword id="KW-0694">RNA-binding</keyword>
<keyword id="KW-0699">rRNA-binding</keyword>
<protein>
    <recommendedName>
        <fullName evidence="1">Small ribosomal subunit protein uS14A</fullName>
    </recommendedName>
    <alternativeName>
        <fullName evidence="2">30S ribosomal protein S14</fullName>
    </alternativeName>
</protein>
<gene>
    <name evidence="1" type="primary">rpsN</name>
    <name type="ordered locus">Lreu_1077</name>
</gene>
<proteinExistence type="inferred from homology"/>
<organism>
    <name type="scientific">Limosilactobacillus reuteri (strain DSM 20016)</name>
    <name type="common">Lactobacillus reuteri</name>
    <dbReference type="NCBI Taxonomy" id="557436"/>
    <lineage>
        <taxon>Bacteria</taxon>
        <taxon>Bacillati</taxon>
        <taxon>Bacillota</taxon>
        <taxon>Bacilli</taxon>
        <taxon>Lactobacillales</taxon>
        <taxon>Lactobacillaceae</taxon>
        <taxon>Limosilactobacillus</taxon>
    </lineage>
</organism>
<accession>A5VKG0</accession>
<evidence type="ECO:0000255" key="1">
    <source>
        <dbReference type="HAMAP-Rule" id="MF_00537"/>
    </source>
</evidence>
<evidence type="ECO:0000305" key="2"/>
<comment type="function">
    <text evidence="1">Binds 16S rRNA, required for the assembly of 30S particles and may also be responsible for determining the conformation of the 16S rRNA at the A site.</text>
</comment>
<comment type="subunit">
    <text evidence="1">Part of the 30S ribosomal subunit. Contacts proteins S3 and S10.</text>
</comment>
<comment type="similarity">
    <text evidence="1">Belongs to the universal ribosomal protein uS14 family.</text>
</comment>
<name>RS14_LIMRD</name>
<sequence length="89" mass="10399">MAKKSKIAKLHHQEALVKKYAEKRKELKAKGDYIGLSKLPRNSSAVRLHNRDRYDGRPHAYMRKFGMSRIKFRELAHKGQIPGVRKASW</sequence>